<keyword id="KW-0002">3D-structure</keyword>
<keyword id="KW-0025">Alternative splicing</keyword>
<keyword id="KW-0037">Angiogenesis</keyword>
<keyword id="KW-0217">Developmental protein</keyword>
<keyword id="KW-0221">Differentiation</keyword>
<keyword id="KW-0903">Direct protein sequencing</keyword>
<keyword id="KW-1015">Disulfide bond</keyword>
<keyword id="KW-0325">Glycoprotein</keyword>
<keyword id="KW-0339">Growth factor</keyword>
<keyword id="KW-0358">Heparin-binding</keyword>
<keyword id="KW-0497">Mitogen</keyword>
<keyword id="KW-1267">Proteomics identification</keyword>
<keyword id="KW-1185">Reference proteome</keyword>
<keyword id="KW-0964">Secreted</keyword>
<keyword id="KW-0732">Signal</keyword>
<organism>
    <name type="scientific">Homo sapiens</name>
    <name type="common">Human</name>
    <dbReference type="NCBI Taxonomy" id="9606"/>
    <lineage>
        <taxon>Eukaryota</taxon>
        <taxon>Metazoa</taxon>
        <taxon>Chordata</taxon>
        <taxon>Craniata</taxon>
        <taxon>Vertebrata</taxon>
        <taxon>Euteleostomi</taxon>
        <taxon>Mammalia</taxon>
        <taxon>Eutheria</taxon>
        <taxon>Euarchontoglires</taxon>
        <taxon>Primates</taxon>
        <taxon>Haplorrhini</taxon>
        <taxon>Catarrhini</taxon>
        <taxon>Hominidae</taxon>
        <taxon>Homo</taxon>
    </lineage>
</organism>
<evidence type="ECO:0000255" key="1"/>
<evidence type="ECO:0000256" key="2">
    <source>
        <dbReference type="SAM" id="MobiDB-lite"/>
    </source>
</evidence>
<evidence type="ECO:0000269" key="3">
    <source>
    </source>
</evidence>
<evidence type="ECO:0000269" key="4">
    <source>
    </source>
</evidence>
<evidence type="ECO:0000303" key="5">
    <source>
    </source>
</evidence>
<evidence type="ECO:0000303" key="6">
    <source>
    </source>
</evidence>
<evidence type="ECO:0000303" key="7">
    <source>
    </source>
</evidence>
<evidence type="ECO:0000303" key="8">
    <source>
    </source>
</evidence>
<evidence type="ECO:0000303" key="9">
    <source>
    </source>
</evidence>
<evidence type="ECO:0000305" key="10"/>
<evidence type="ECO:0000305" key="11">
    <source>
    </source>
</evidence>
<evidence type="ECO:0007829" key="12">
    <source>
        <dbReference type="PDB" id="1FZV"/>
    </source>
</evidence>
<evidence type="ECO:0007829" key="13">
    <source>
        <dbReference type="PDB" id="1RV6"/>
    </source>
</evidence>
<proteinExistence type="evidence at protein level"/>
<dbReference type="EMBL" id="X54936">
    <property type="protein sequence ID" value="CAA38698.1"/>
    <property type="molecule type" value="mRNA"/>
</dbReference>
<dbReference type="EMBL" id="S72960">
    <property type="protein sequence ID" value="AAB30462.2"/>
    <property type="molecule type" value="mRNA"/>
</dbReference>
<dbReference type="EMBL" id="AC006530">
    <property type="protein sequence ID" value="AAD30179.1"/>
    <property type="molecule type" value="Genomic_DNA"/>
</dbReference>
<dbReference type="EMBL" id="BC001422">
    <property type="protein sequence ID" value="AAH01422.1"/>
    <property type="molecule type" value="mRNA"/>
</dbReference>
<dbReference type="EMBL" id="BC007789">
    <property type="protein sequence ID" value="AAH07789.1"/>
    <property type="molecule type" value="mRNA"/>
</dbReference>
<dbReference type="EMBL" id="BC007255">
    <property type="protein sequence ID" value="AAH07255.1"/>
    <property type="molecule type" value="mRNA"/>
</dbReference>
<dbReference type="EMBL" id="S57152">
    <property type="protein sequence ID" value="AAB25832.2"/>
    <property type="status" value="ALT_SEQ"/>
    <property type="molecule type" value="Genomic_DNA"/>
</dbReference>
<dbReference type="CCDS" id="CCDS55932.1">
    <molecule id="P49763-2"/>
</dbReference>
<dbReference type="CCDS" id="CCDS9835.1">
    <molecule id="P49763-3"/>
</dbReference>
<dbReference type="PIR" id="A41236">
    <property type="entry name" value="A41236"/>
</dbReference>
<dbReference type="RefSeq" id="NP_001193941.1">
    <molecule id="P49763-2"/>
    <property type="nucleotide sequence ID" value="NM_001207012.1"/>
</dbReference>
<dbReference type="RefSeq" id="NP_002623.2">
    <molecule id="P49763-3"/>
    <property type="nucleotide sequence ID" value="NM_002632.5"/>
</dbReference>
<dbReference type="PDB" id="1FZV">
    <property type="method" value="X-ray"/>
    <property type="resolution" value="2.00 A"/>
    <property type="chains" value="A/B=19-131, A/B=204-221"/>
</dbReference>
<dbReference type="PDB" id="1RV6">
    <property type="method" value="X-ray"/>
    <property type="resolution" value="2.45 A"/>
    <property type="chains" value="V/W=37-136"/>
</dbReference>
<dbReference type="PDBsum" id="1FZV"/>
<dbReference type="PDBsum" id="1RV6"/>
<dbReference type="SMR" id="P49763"/>
<dbReference type="BioGRID" id="111249">
    <property type="interactions" value="7"/>
</dbReference>
<dbReference type="CORUM" id="P49763"/>
<dbReference type="DIP" id="DIP-5752N"/>
<dbReference type="FunCoup" id="P49763">
    <property type="interactions" value="1021"/>
</dbReference>
<dbReference type="IntAct" id="P49763">
    <property type="interactions" value="2"/>
</dbReference>
<dbReference type="STRING" id="9606.ENSP00000451040"/>
<dbReference type="BindingDB" id="P49763"/>
<dbReference type="ChEMBL" id="CHEMBL1697671"/>
<dbReference type="DrugBank" id="DB08885">
    <property type="generic name" value="Aflibercept"/>
</dbReference>
<dbReference type="DrugCentral" id="P49763"/>
<dbReference type="GlyCosmos" id="P49763">
    <property type="glycosylation" value="2 sites, No reported glycans"/>
</dbReference>
<dbReference type="GlyGen" id="P49763">
    <property type="glycosylation" value="2 sites"/>
</dbReference>
<dbReference type="iPTMnet" id="P49763"/>
<dbReference type="PhosphoSitePlus" id="P49763"/>
<dbReference type="BioMuta" id="PGF"/>
<dbReference type="DMDM" id="17380553"/>
<dbReference type="MassIVE" id="P49763"/>
<dbReference type="PaxDb" id="9606-ENSP00000451040"/>
<dbReference type="PeptideAtlas" id="P49763"/>
<dbReference type="ProteomicsDB" id="56100">
    <molecule id="P49763-1"/>
</dbReference>
<dbReference type="ProteomicsDB" id="56101">
    <molecule id="P49763-2"/>
</dbReference>
<dbReference type="ProteomicsDB" id="56102">
    <molecule id="P49763-3"/>
</dbReference>
<dbReference type="ABCD" id="P49763">
    <property type="antibodies" value="12 sequenced antibodies"/>
</dbReference>
<dbReference type="Antibodypedia" id="12927">
    <property type="antibodies" value="973 antibodies from 44 providers"/>
</dbReference>
<dbReference type="DNASU" id="5228"/>
<dbReference type="Ensembl" id="ENST00000405431.2">
    <molecule id="P49763-1"/>
    <property type="protein sequence ID" value="ENSP00000385365.2"/>
    <property type="gene ID" value="ENSG00000119630.14"/>
</dbReference>
<dbReference type="Ensembl" id="ENST00000553716.5">
    <molecule id="P49763-2"/>
    <property type="protein sequence ID" value="ENSP00000451413.1"/>
    <property type="gene ID" value="ENSG00000119630.14"/>
</dbReference>
<dbReference type="Ensembl" id="ENST00000555567.6">
    <molecule id="P49763-3"/>
    <property type="protein sequence ID" value="ENSP00000451040.1"/>
    <property type="gene ID" value="ENSG00000119630.14"/>
</dbReference>
<dbReference type="GeneID" id="5228"/>
<dbReference type="KEGG" id="hsa:5228"/>
<dbReference type="MANE-Select" id="ENST00000555567.6">
    <molecule id="P49763-3"/>
    <property type="protein sequence ID" value="ENSP00000451040.1"/>
    <property type="RefSeq nucleotide sequence ID" value="NM_002632.6"/>
    <property type="RefSeq protein sequence ID" value="NP_002623.2"/>
</dbReference>
<dbReference type="UCSC" id="uc001xrb.4">
    <molecule id="P49763-1"/>
    <property type="organism name" value="human"/>
</dbReference>
<dbReference type="AGR" id="HGNC:8893"/>
<dbReference type="CTD" id="5228"/>
<dbReference type="DisGeNET" id="5228"/>
<dbReference type="GeneCards" id="PGF"/>
<dbReference type="HGNC" id="HGNC:8893">
    <property type="gene designation" value="PGF"/>
</dbReference>
<dbReference type="HPA" id="ENSG00000119630">
    <property type="expression patterns" value="Tissue enhanced (choroid plexus, thyroid gland)"/>
</dbReference>
<dbReference type="MIM" id="601121">
    <property type="type" value="gene"/>
</dbReference>
<dbReference type="neXtProt" id="NX_P49763"/>
<dbReference type="OpenTargets" id="ENSG00000119630"/>
<dbReference type="PharmGKB" id="PA33231"/>
<dbReference type="VEuPathDB" id="HostDB:ENSG00000119630"/>
<dbReference type="eggNOG" id="ENOG502S2DE">
    <property type="taxonomic scope" value="Eukaryota"/>
</dbReference>
<dbReference type="GeneTree" id="ENSGT00940000160164"/>
<dbReference type="HOGENOM" id="CLU_042996_3_0_1"/>
<dbReference type="InParanoid" id="P49763"/>
<dbReference type="OMA" id="HKSCECR"/>
<dbReference type="OrthoDB" id="6370328at2759"/>
<dbReference type="PAN-GO" id="P49763">
    <property type="GO annotations" value="13 GO annotations based on evolutionary models"/>
</dbReference>
<dbReference type="PhylomeDB" id="P49763"/>
<dbReference type="TreeFam" id="TF319554"/>
<dbReference type="PathwayCommons" id="P49763"/>
<dbReference type="Reactome" id="R-HSA-194313">
    <property type="pathway name" value="VEGF ligand-receptor interactions"/>
</dbReference>
<dbReference type="Reactome" id="R-HSA-195399">
    <property type="pathway name" value="VEGF binds to VEGFR leading to receptor dimerization"/>
</dbReference>
<dbReference type="SignaLink" id="P49763"/>
<dbReference type="SIGNOR" id="P49763"/>
<dbReference type="BioGRID-ORCS" id="5228">
    <property type="hits" value="8 hits in 1155 CRISPR screens"/>
</dbReference>
<dbReference type="ChiTaRS" id="PGF">
    <property type="organism name" value="human"/>
</dbReference>
<dbReference type="EvolutionaryTrace" id="P49763"/>
<dbReference type="GeneWiki" id="Placental_growth_factor"/>
<dbReference type="GenomeRNAi" id="5228"/>
<dbReference type="Pharos" id="P49763">
    <property type="development level" value="Tclin"/>
</dbReference>
<dbReference type="PRO" id="PR:P49763"/>
<dbReference type="Proteomes" id="UP000005640">
    <property type="component" value="Chromosome 14"/>
</dbReference>
<dbReference type="RNAct" id="P49763">
    <property type="molecule type" value="protein"/>
</dbReference>
<dbReference type="Bgee" id="ENSG00000119630">
    <property type="expression patterns" value="Expressed in renal medulla and 206 other cell types or tissues"/>
</dbReference>
<dbReference type="ExpressionAtlas" id="P49763">
    <property type="expression patterns" value="baseline and differential"/>
</dbReference>
<dbReference type="GO" id="GO:0005576">
    <property type="term" value="C:extracellular region"/>
    <property type="evidence" value="ECO:0000304"/>
    <property type="project" value="Reactome"/>
</dbReference>
<dbReference type="GO" id="GO:0005615">
    <property type="term" value="C:extracellular space"/>
    <property type="evidence" value="ECO:0000318"/>
    <property type="project" value="GO_Central"/>
</dbReference>
<dbReference type="GO" id="GO:0016020">
    <property type="term" value="C:membrane"/>
    <property type="evidence" value="ECO:0007669"/>
    <property type="project" value="InterPro"/>
</dbReference>
<dbReference type="GO" id="GO:0042056">
    <property type="term" value="F:chemoattractant activity"/>
    <property type="evidence" value="ECO:0000318"/>
    <property type="project" value="GO_Central"/>
</dbReference>
<dbReference type="GO" id="GO:0008083">
    <property type="term" value="F:growth factor activity"/>
    <property type="evidence" value="ECO:0000315"/>
    <property type="project" value="UniProtKB"/>
</dbReference>
<dbReference type="GO" id="GO:0008201">
    <property type="term" value="F:heparin binding"/>
    <property type="evidence" value="ECO:0007669"/>
    <property type="project" value="UniProtKB-KW"/>
</dbReference>
<dbReference type="GO" id="GO:0005172">
    <property type="term" value="F:vascular endothelial growth factor receptor binding"/>
    <property type="evidence" value="ECO:0000318"/>
    <property type="project" value="GO_Central"/>
</dbReference>
<dbReference type="GO" id="GO:0030154">
    <property type="term" value="P:cell differentiation"/>
    <property type="evidence" value="ECO:0007669"/>
    <property type="project" value="UniProtKB-KW"/>
</dbReference>
<dbReference type="GO" id="GO:0007267">
    <property type="term" value="P:cell-cell signaling"/>
    <property type="evidence" value="ECO:0000304"/>
    <property type="project" value="ProtInc"/>
</dbReference>
<dbReference type="GO" id="GO:0050930">
    <property type="term" value="P:induction of positive chemotaxis"/>
    <property type="evidence" value="ECO:0000318"/>
    <property type="project" value="GO_Central"/>
</dbReference>
<dbReference type="GO" id="GO:0051781">
    <property type="term" value="P:positive regulation of cell division"/>
    <property type="evidence" value="ECO:0007669"/>
    <property type="project" value="UniProtKB-KW"/>
</dbReference>
<dbReference type="GO" id="GO:0008284">
    <property type="term" value="P:positive regulation of cell population proliferation"/>
    <property type="evidence" value="ECO:0000315"/>
    <property type="project" value="UniProtKB"/>
</dbReference>
<dbReference type="GO" id="GO:0060754">
    <property type="term" value="P:positive regulation of mast cell chemotaxis"/>
    <property type="evidence" value="ECO:0000318"/>
    <property type="project" value="GO_Central"/>
</dbReference>
<dbReference type="GO" id="GO:0001666">
    <property type="term" value="P:response to hypoxia"/>
    <property type="evidence" value="ECO:0000318"/>
    <property type="project" value="GO_Central"/>
</dbReference>
<dbReference type="GO" id="GO:0007165">
    <property type="term" value="P:signal transduction"/>
    <property type="evidence" value="ECO:0000304"/>
    <property type="project" value="ProtInc"/>
</dbReference>
<dbReference type="GO" id="GO:0002040">
    <property type="term" value="P:sprouting angiogenesis"/>
    <property type="evidence" value="ECO:0000318"/>
    <property type="project" value="GO_Central"/>
</dbReference>
<dbReference type="GO" id="GO:0048010">
    <property type="term" value="P:vascular endothelial growth factor receptor signaling pathway"/>
    <property type="evidence" value="ECO:0000318"/>
    <property type="project" value="GO_Central"/>
</dbReference>
<dbReference type="GO" id="GO:0038084">
    <property type="term" value="P:vascular endothelial growth factor signaling pathway"/>
    <property type="evidence" value="ECO:0000318"/>
    <property type="project" value="GO_Central"/>
</dbReference>
<dbReference type="CDD" id="cd00135">
    <property type="entry name" value="PDGF"/>
    <property type="match status" value="1"/>
</dbReference>
<dbReference type="FunFam" id="2.10.90.10:FF:000031">
    <property type="entry name" value="placenta growth factor isoform X2"/>
    <property type="match status" value="1"/>
</dbReference>
<dbReference type="Gene3D" id="2.10.90.10">
    <property type="entry name" value="Cystine-knot cytokines"/>
    <property type="match status" value="1"/>
</dbReference>
<dbReference type="InterPro" id="IPR029034">
    <property type="entry name" value="Cystine-knot_cytokine"/>
</dbReference>
<dbReference type="InterPro" id="IPR023581">
    <property type="entry name" value="PD_growth_factor_CS"/>
</dbReference>
<dbReference type="InterPro" id="IPR000072">
    <property type="entry name" value="PDGF/VEGF_dom"/>
</dbReference>
<dbReference type="InterPro" id="IPR050507">
    <property type="entry name" value="PDGF/VEGF_growth_factor"/>
</dbReference>
<dbReference type="PANTHER" id="PTHR12025:SF9">
    <property type="entry name" value="PLACENTA GROWTH FACTOR"/>
    <property type="match status" value="1"/>
</dbReference>
<dbReference type="PANTHER" id="PTHR12025">
    <property type="entry name" value="VASCULAR ENDOTHELIAL GROWTH FACTOR"/>
    <property type="match status" value="1"/>
</dbReference>
<dbReference type="Pfam" id="PF00341">
    <property type="entry name" value="PDGF"/>
    <property type="match status" value="1"/>
</dbReference>
<dbReference type="SMART" id="SM00141">
    <property type="entry name" value="PDGF"/>
    <property type="match status" value="1"/>
</dbReference>
<dbReference type="SUPFAM" id="SSF57501">
    <property type="entry name" value="Cystine-knot cytokines"/>
    <property type="match status" value="1"/>
</dbReference>
<dbReference type="PROSITE" id="PS00249">
    <property type="entry name" value="PDGF_1"/>
    <property type="match status" value="1"/>
</dbReference>
<dbReference type="PROSITE" id="PS50278">
    <property type="entry name" value="PDGF_2"/>
    <property type="match status" value="1"/>
</dbReference>
<reference key="1">
    <citation type="journal article" date="1991" name="Proc. Natl. Acad. Sci. U.S.A.">
        <title>Isolation of a human placenta cDNA coding for a protein related to the vascular permeability factor.</title>
        <authorList>
            <person name="Maglione D."/>
            <person name="Guerriero V."/>
            <person name="Viglietto G."/>
            <person name="Delli-Bovi P."/>
            <person name="Persico M.G."/>
        </authorList>
    </citation>
    <scope>NUCLEOTIDE SEQUENCE [MRNA] (ISOFORM PLGF-1)</scope>
    <source>
        <tissue>Placenta</tissue>
    </source>
</reference>
<reference key="2">
    <citation type="journal article" date="1993" name="Growth Factors">
        <title>A heparin-binding form of placenta growth factor (PlGF-2) is expressed in human umbilical vein endothelial cells and in placenta.</title>
        <authorList>
            <person name="Hauser S.D."/>
            <person name="Weich H.A."/>
        </authorList>
    </citation>
    <scope>NUCLEOTIDE SEQUENCE [MRNA] (ISOFORM PLGF-2)</scope>
    <source>
        <tissue>Placenta</tissue>
    </source>
</reference>
<reference key="3">
    <citation type="journal article" date="1997" name="Biochem. Biophys. Res. Commun.">
        <title>Placenta growth factor: identification and characterization of a novel isoform generated by RNA alternative splicing.</title>
        <authorList>
            <person name="Cao Y."/>
            <person name="Ji W.-R."/>
            <person name="Qi P."/>
            <person name="Rosin A."/>
            <person name="Cao Y."/>
        </authorList>
    </citation>
    <scope>NUCLEOTIDE SEQUENCE [MRNA] (ISOFORM PLGF-3)</scope>
    <source>
        <tissue>Placenta</tissue>
    </source>
</reference>
<reference key="4">
    <citation type="journal article" date="2003" name="J. Reprod. Immunol.">
        <title>Evidence of a novel isoform of placenta growth factor (PlGF-4) expressed in human trophoblast and endothelial cells.</title>
        <authorList>
            <person name="Yang W."/>
            <person name="Ahn H."/>
            <person name="Hinrichs M."/>
            <person name="Torry R.J."/>
            <person name="Torry D.S."/>
        </authorList>
    </citation>
    <scope>NUCLEOTIDE SEQUENCE [MRNA] (ISOFORM PLGF-4)</scope>
    <source>
        <tissue>Placenta</tissue>
    </source>
</reference>
<reference key="5">
    <citation type="journal article" date="2003" name="Nature">
        <title>The DNA sequence and analysis of human chromosome 14.</title>
        <authorList>
            <person name="Heilig R."/>
            <person name="Eckenberg R."/>
            <person name="Petit J.-L."/>
            <person name="Fonknechten N."/>
            <person name="Da Silva C."/>
            <person name="Cattolico L."/>
            <person name="Levy M."/>
            <person name="Barbe V."/>
            <person name="De Berardinis V."/>
            <person name="Ureta-Vidal A."/>
            <person name="Pelletier E."/>
            <person name="Vico V."/>
            <person name="Anthouard V."/>
            <person name="Rowen L."/>
            <person name="Madan A."/>
            <person name="Qin S."/>
            <person name="Sun H."/>
            <person name="Du H."/>
            <person name="Pepin K."/>
            <person name="Artiguenave F."/>
            <person name="Robert C."/>
            <person name="Cruaud C."/>
            <person name="Bruels T."/>
            <person name="Jaillon O."/>
            <person name="Friedlander L."/>
            <person name="Samson G."/>
            <person name="Brottier P."/>
            <person name="Cure S."/>
            <person name="Segurens B."/>
            <person name="Aniere F."/>
            <person name="Samain S."/>
            <person name="Crespeau H."/>
            <person name="Abbasi N."/>
            <person name="Aiach N."/>
            <person name="Boscus D."/>
            <person name="Dickhoff R."/>
            <person name="Dors M."/>
            <person name="Dubois I."/>
            <person name="Friedman C."/>
            <person name="Gouyvenoux M."/>
            <person name="James R."/>
            <person name="Madan A."/>
            <person name="Mairey-Estrada B."/>
            <person name="Mangenot S."/>
            <person name="Martins N."/>
            <person name="Menard M."/>
            <person name="Oztas S."/>
            <person name="Ratcliffe A."/>
            <person name="Shaffer T."/>
            <person name="Trask B."/>
            <person name="Vacherie B."/>
            <person name="Bellemere C."/>
            <person name="Belser C."/>
            <person name="Besnard-Gonnet M."/>
            <person name="Bartol-Mavel D."/>
            <person name="Boutard M."/>
            <person name="Briez-Silla S."/>
            <person name="Combette S."/>
            <person name="Dufosse-Laurent V."/>
            <person name="Ferron C."/>
            <person name="Lechaplais C."/>
            <person name="Louesse C."/>
            <person name="Muselet D."/>
            <person name="Magdelenat G."/>
            <person name="Pateau E."/>
            <person name="Petit E."/>
            <person name="Sirvain-Trukniewicz P."/>
            <person name="Trybou A."/>
            <person name="Vega-Czarny N."/>
            <person name="Bataille E."/>
            <person name="Bluet E."/>
            <person name="Bordelais I."/>
            <person name="Dubois M."/>
            <person name="Dumont C."/>
            <person name="Guerin T."/>
            <person name="Haffray S."/>
            <person name="Hammadi R."/>
            <person name="Muanga J."/>
            <person name="Pellouin V."/>
            <person name="Robert D."/>
            <person name="Wunderle E."/>
            <person name="Gauguet G."/>
            <person name="Roy A."/>
            <person name="Sainte-Marthe L."/>
            <person name="Verdier J."/>
            <person name="Verdier-Discala C."/>
            <person name="Hillier L.W."/>
            <person name="Fulton L."/>
            <person name="McPherson J."/>
            <person name="Matsuda F."/>
            <person name="Wilson R."/>
            <person name="Scarpelli C."/>
            <person name="Gyapay G."/>
            <person name="Wincker P."/>
            <person name="Saurin W."/>
            <person name="Quetier F."/>
            <person name="Waterston R."/>
            <person name="Hood L."/>
            <person name="Weissenbach J."/>
        </authorList>
    </citation>
    <scope>NUCLEOTIDE SEQUENCE [LARGE SCALE GENOMIC DNA]</scope>
</reference>
<reference key="6">
    <citation type="journal article" date="2004" name="Genome Res.">
        <title>The status, quality, and expansion of the NIH full-length cDNA project: the Mammalian Gene Collection (MGC).</title>
        <authorList>
            <consortium name="The MGC Project Team"/>
        </authorList>
    </citation>
    <scope>NUCLEOTIDE SEQUENCE [LARGE SCALE MRNA] (ISOFORM PLGF-2)</scope>
    <source>
        <tissue>Muscle</tissue>
        <tissue>Placenta</tissue>
    </source>
</reference>
<reference key="7">
    <citation type="journal article" date="1994" name="J. Biol. Chem.">
        <title>Placenta growth factor. Potentiation of vascular endothelial growth factor bioactivity, in vitro and in vivo, and high affinity binding to Flt-1 but not to Flk-1/KDR.</title>
        <authorList>
            <person name="Park J.E."/>
            <person name="Chen H.H."/>
            <person name="Winer J."/>
            <person name="Houck K.A."/>
            <person name="Ferrara N."/>
        </authorList>
    </citation>
    <scope>PROTEIN SEQUENCE OF 19-24</scope>
    <scope>CHARACTERIZATION</scope>
</reference>
<reference key="8">
    <citation type="journal article" date="1993" name="Oncogene">
        <title>Two alternative mRNAs coding for the angiogenic factor, placenta growth factor (PlGF), are transcribed from a single gene of chromosome 14.</title>
        <authorList>
            <person name="Maglione D."/>
            <person name="Guerriero V."/>
            <person name="Viglietto G."/>
            <person name="Ferraro M.G."/>
            <person name="Aprelikova O."/>
            <person name="Alitalo K."/>
            <person name="del Vecchio S."/>
            <person name="Lei K.-J."/>
            <person name="Chou J.Y."/>
            <person name="Persico M.G."/>
        </authorList>
    </citation>
    <scope>PARTIAL NUCLEOTIDE SEQUENCE [GENOMIC DNA] (ISOFORM PLGF-2)</scope>
</reference>
<reference key="9">
    <citation type="journal article" date="2011" name="Cancer Cell">
        <title>HRG inhibits tumor growth and metastasis by inducing macrophage polarization and vessel normalization through downregulation of PlGF.</title>
        <authorList>
            <person name="Rolny C."/>
            <person name="Mazzone M."/>
            <person name="Tugues S."/>
            <person name="Laoui D."/>
            <person name="Johansson I."/>
            <person name="Coulon C."/>
            <person name="Squadrito M.L."/>
            <person name="Segura I."/>
            <person name="Li X."/>
            <person name="Knevels E."/>
            <person name="Costa S."/>
            <person name="Vinckier S."/>
            <person name="Dresselaer T."/>
            <person name="Akerud P."/>
            <person name="De Mol M."/>
            <person name="Salomaki H."/>
            <person name="Phillipson M."/>
            <person name="Wyns S."/>
            <person name="Larsson E."/>
            <person name="Buysschaert I."/>
            <person name="Botling J."/>
            <person name="Himmelreich U."/>
            <person name="Van Ginderachter J.A."/>
            <person name="De Palma M."/>
            <person name="Dewerchin M."/>
            <person name="Claesson-Welsh L."/>
            <person name="Carmeliet P."/>
        </authorList>
    </citation>
    <scope>FUNCTION AS A TUMOR ACTIVATOR</scope>
</reference>
<reference key="10">
    <citation type="journal article" date="2001" name="J. Biol. Chem.">
        <title>The crystal structure of human placenta growth factor-1 (PlGF-1), an angiogenic protein, at 2.0 A resolution.</title>
        <authorList>
            <person name="Iyer S."/>
            <person name="Leonidas D.D."/>
            <person name="Swaminathan G.J."/>
            <person name="Maglione D."/>
            <person name="Battisti M."/>
            <person name="Tucci M."/>
            <person name="Persico M.G."/>
            <person name="Acharya K.R."/>
        </authorList>
    </citation>
    <scope>X-RAY CRYSTALLOGRAPHY (2.0 ANGSTROMS) (ISOFORM PLGF-1)</scope>
</reference>
<protein>
    <recommendedName>
        <fullName>Placenta growth factor</fullName>
        <shortName>PlGF</shortName>
    </recommendedName>
</protein>
<name>PLGF_HUMAN</name>
<comment type="function">
    <text evidence="3">Growth factor active in angiogenesis and endothelial cell growth, stimulating their proliferation and migration. It binds to the receptor FLT1/VEGFR-1. Isoform PlGF-2 binds NRP1/neuropilin-1 and NRP2/neuropilin-2 in a heparin-dependent manner. Also promotes cell tumor growth.</text>
</comment>
<comment type="subunit">
    <text>Antiparallel homodimer; disulfide-linked. Also found as heterodimer with VEGFA/VEGF. Isoform PlGF-3 is found both as homodimer and as monomer.</text>
</comment>
<comment type="interaction">
    <interactant intactId="EBI-1037633">
        <id>P49763</id>
    </interactant>
    <interactant intactId="EBI-1026718">
        <id>P17948</id>
        <label>FLT1</label>
    </interactant>
    <organismsDiffer>false</organismsDiffer>
    <experiments>2</experiments>
</comment>
<comment type="subcellular location">
    <subcellularLocation>
        <location>Secreted</location>
    </subcellularLocation>
    <text>The three isoforms are secreted but PlGF-2 appears to remain cell attached unless released by heparin.</text>
</comment>
<comment type="alternative products">
    <event type="alternative splicing"/>
    <isoform>
        <id>P49763-1</id>
        <name evidence="9">PlGF-3</name>
        <name>PlGF-203</name>
        <sequence type="displayed"/>
    </isoform>
    <isoform>
        <id>P49763-2</id>
        <name evidence="9">PlGF-1</name>
        <name>PlGF-131</name>
        <sequence type="described" ref="VSP_004644"/>
    </isoform>
    <isoform>
        <id>P49763-3</id>
        <name evidence="8">PlGF-2</name>
        <name>PlGF-152</name>
        <sequence type="described" ref="VSP_004644 VSP_004645"/>
    </isoform>
    <isoform>
        <id>P49763-4</id>
        <name evidence="5">PlGF-4</name>
        <name>PlGF-224</name>
        <sequence type="described" ref="VSP_004645"/>
    </isoform>
</comment>
<comment type="tissue specificity">
    <text>While the three isoforms are present in most placental tissues, PlGF-2 is specific to early (8 week) placenta and only PlGF-1 is found in the colon and mammary carcinomas.</text>
</comment>
<comment type="domain">
    <text>Isoform PlGF-2 contains a basic insert which acts as a cell retention signal.</text>
</comment>
<comment type="PTM">
    <text>N-glycosylated.</text>
</comment>
<comment type="similarity">
    <text evidence="10">Belongs to the PDGF/VEGF growth factor family.</text>
</comment>
<comment type="sequence caution" evidence="10">
    <conflict type="erroneous translation">
        <sequence resource="EMBL-CDS" id="AAB25832"/>
    </conflict>
    <text>Wrong choice of frame.</text>
</comment>
<gene>
    <name type="primary">PGF</name>
    <name type="synonym">PGFL</name>
    <name type="synonym">PLGF</name>
</gene>
<feature type="signal peptide" evidence="4">
    <location>
        <begin position="1"/>
        <end position="18"/>
    </location>
</feature>
<feature type="chain" id="PRO_0000023420" description="Placenta growth factor">
    <location>
        <begin position="19"/>
        <end position="221"/>
    </location>
</feature>
<feature type="region of interest" description="Disordered" evidence="2">
    <location>
        <begin position="175"/>
        <end position="221"/>
    </location>
</feature>
<feature type="region of interest" description="Heparin-binding" evidence="10">
    <location>
        <begin position="193"/>
        <end position="213"/>
    </location>
</feature>
<feature type="compositionally biased region" description="Basic residues" evidence="2">
    <location>
        <begin position="192"/>
        <end position="203"/>
    </location>
</feature>
<feature type="compositionally biased region" description="Basic and acidic residues" evidence="2">
    <location>
        <begin position="204"/>
        <end position="221"/>
    </location>
</feature>
<feature type="glycosylation site" description="N-linked (GlcNAc...) asparagine" evidence="1">
    <location>
        <position position="33"/>
    </location>
</feature>
<feature type="glycosylation site" description="N-linked (GlcNAc...) asparagine" evidence="1">
    <location>
        <position position="101"/>
    </location>
</feature>
<feature type="disulfide bond">
    <location>
        <begin position="52"/>
        <end position="94"/>
    </location>
</feature>
<feature type="disulfide bond" description="Interchain">
    <location>
        <position position="77"/>
    </location>
</feature>
<feature type="disulfide bond">
    <location>
        <begin position="83"/>
        <end position="128"/>
    </location>
</feature>
<feature type="disulfide bond" description="Interchain">
    <location>
        <position position="86"/>
    </location>
</feature>
<feature type="disulfide bond">
    <location>
        <begin position="87"/>
        <end position="130"/>
    </location>
</feature>
<feature type="splice variant" id="VSP_004644" description="In isoform PlGF-1 and isoform PlGF-2." evidence="6 7 8">
    <location>
        <begin position="132"/>
        <end position="203"/>
    </location>
</feature>
<feature type="splice variant" id="VSP_004645" description="In isoform PlGF-2 and isoform PlGF-4." evidence="6 8 11">
    <original>R</original>
    <variation>RRRPKGRGKRRREKQRPTDCHL</variation>
    <location>
        <position position="213"/>
    </location>
</feature>
<feature type="sequence conflict" description="In Ref. 2; AAB30462." evidence="10" ref="2">
    <original>N</original>
    <variation>D</variation>
    <location>
        <position position="91"/>
    </location>
</feature>
<feature type="helix" evidence="12">
    <location>
        <begin position="43"/>
        <end position="50"/>
    </location>
</feature>
<feature type="strand" evidence="12">
    <location>
        <begin position="51"/>
        <end position="60"/>
    </location>
</feature>
<feature type="helix" evidence="12">
    <location>
        <begin position="62"/>
        <end position="64"/>
    </location>
</feature>
<feature type="strand" evidence="12">
    <location>
        <begin position="65"/>
        <end position="67"/>
    </location>
</feature>
<feature type="strand" evidence="12">
    <location>
        <begin position="73"/>
        <end position="84"/>
    </location>
</feature>
<feature type="strand" evidence="12">
    <location>
        <begin position="92"/>
        <end position="108"/>
    </location>
</feature>
<feature type="strand" evidence="13">
    <location>
        <begin position="111"/>
        <end position="113"/>
    </location>
</feature>
<feature type="strand" evidence="12">
    <location>
        <begin position="116"/>
        <end position="132"/>
    </location>
</feature>
<sequence length="221" mass="24789">MPVMRLFPCFLQLLAGLALPAVPPQQWALSAGNGSSEVEVVPFQEVWGRSYCRALERLVDVVSEYPSEVEHMFSPSCVSLLRCTGCCGDENLHCVPVETANVTMQLLKIRSGDRPSYVELTFSQHVRCECRHSPGRQSPDMPGDFRADAPSFLPPRRSLPMLFRMEWGCALTGSQSAVWPSSPVPEEIPRMHPGRNGKKQQRKPLREKMKPERCGDAVPRR</sequence>
<accession>P49763</accession>
<accession>Q07101</accession>
<accession>Q9BV78</accession>
<accession>Q9Y6S8</accession>